<feature type="chain" id="PRO_1000121929" description="Glutamate-1-semialdehyde 2,1-aminomutase">
    <location>
        <begin position="1"/>
        <end position="431"/>
    </location>
</feature>
<feature type="modified residue" description="N6-(pyridoxal phosphate)lysine" evidence="1">
    <location>
        <position position="265"/>
    </location>
</feature>
<dbReference type="EC" id="5.4.3.8" evidence="1"/>
<dbReference type="EMBL" id="CP001139">
    <property type="protein sequence ID" value="ACH67133.1"/>
    <property type="molecule type" value="Genomic_DNA"/>
</dbReference>
<dbReference type="RefSeq" id="WP_012534220.1">
    <property type="nucleotide sequence ID" value="NC_011184.1"/>
</dbReference>
<dbReference type="SMR" id="B5FAL8"/>
<dbReference type="KEGG" id="vfm:VFMJ11_2243"/>
<dbReference type="HOGENOM" id="CLU_016922_1_5_6"/>
<dbReference type="UniPathway" id="UPA00251">
    <property type="reaction ID" value="UER00317"/>
</dbReference>
<dbReference type="Proteomes" id="UP000001857">
    <property type="component" value="Chromosome I"/>
</dbReference>
<dbReference type="GO" id="GO:0005737">
    <property type="term" value="C:cytoplasm"/>
    <property type="evidence" value="ECO:0007669"/>
    <property type="project" value="UniProtKB-SubCell"/>
</dbReference>
<dbReference type="GO" id="GO:0042286">
    <property type="term" value="F:glutamate-1-semialdehyde 2,1-aminomutase activity"/>
    <property type="evidence" value="ECO:0007669"/>
    <property type="project" value="UniProtKB-UniRule"/>
</dbReference>
<dbReference type="GO" id="GO:0030170">
    <property type="term" value="F:pyridoxal phosphate binding"/>
    <property type="evidence" value="ECO:0007669"/>
    <property type="project" value="InterPro"/>
</dbReference>
<dbReference type="GO" id="GO:0008483">
    <property type="term" value="F:transaminase activity"/>
    <property type="evidence" value="ECO:0007669"/>
    <property type="project" value="InterPro"/>
</dbReference>
<dbReference type="GO" id="GO:0006782">
    <property type="term" value="P:protoporphyrinogen IX biosynthetic process"/>
    <property type="evidence" value="ECO:0007669"/>
    <property type="project" value="UniProtKB-UniRule"/>
</dbReference>
<dbReference type="CDD" id="cd00610">
    <property type="entry name" value="OAT_like"/>
    <property type="match status" value="1"/>
</dbReference>
<dbReference type="FunFam" id="3.40.640.10:FF:000021">
    <property type="entry name" value="Glutamate-1-semialdehyde 2,1-aminomutase"/>
    <property type="match status" value="1"/>
</dbReference>
<dbReference type="FunFam" id="3.90.1150.10:FF:000012">
    <property type="entry name" value="Glutamate-1-semialdehyde 2,1-aminomutase"/>
    <property type="match status" value="1"/>
</dbReference>
<dbReference type="Gene3D" id="3.90.1150.10">
    <property type="entry name" value="Aspartate Aminotransferase, domain 1"/>
    <property type="match status" value="1"/>
</dbReference>
<dbReference type="Gene3D" id="3.40.640.10">
    <property type="entry name" value="Type I PLP-dependent aspartate aminotransferase-like (Major domain)"/>
    <property type="match status" value="1"/>
</dbReference>
<dbReference type="HAMAP" id="MF_00375">
    <property type="entry name" value="HemL_aminotrans_3"/>
    <property type="match status" value="1"/>
</dbReference>
<dbReference type="InterPro" id="IPR004639">
    <property type="entry name" value="4pyrrol_synth_GluAld_NH2Trfase"/>
</dbReference>
<dbReference type="InterPro" id="IPR005814">
    <property type="entry name" value="Aminotrans_3"/>
</dbReference>
<dbReference type="InterPro" id="IPR049704">
    <property type="entry name" value="Aminotrans_3_PPA_site"/>
</dbReference>
<dbReference type="InterPro" id="IPR015424">
    <property type="entry name" value="PyrdxlP-dep_Trfase"/>
</dbReference>
<dbReference type="InterPro" id="IPR015421">
    <property type="entry name" value="PyrdxlP-dep_Trfase_major"/>
</dbReference>
<dbReference type="InterPro" id="IPR015422">
    <property type="entry name" value="PyrdxlP-dep_Trfase_small"/>
</dbReference>
<dbReference type="NCBIfam" id="TIGR00713">
    <property type="entry name" value="hemL"/>
    <property type="match status" value="1"/>
</dbReference>
<dbReference type="NCBIfam" id="NF000818">
    <property type="entry name" value="PRK00062.1"/>
    <property type="match status" value="1"/>
</dbReference>
<dbReference type="PANTHER" id="PTHR43713">
    <property type="entry name" value="GLUTAMATE-1-SEMIALDEHYDE 2,1-AMINOMUTASE"/>
    <property type="match status" value="1"/>
</dbReference>
<dbReference type="PANTHER" id="PTHR43713:SF3">
    <property type="entry name" value="GLUTAMATE-1-SEMIALDEHYDE 2,1-AMINOMUTASE 1, CHLOROPLASTIC-RELATED"/>
    <property type="match status" value="1"/>
</dbReference>
<dbReference type="Pfam" id="PF00202">
    <property type="entry name" value="Aminotran_3"/>
    <property type="match status" value="1"/>
</dbReference>
<dbReference type="SUPFAM" id="SSF53383">
    <property type="entry name" value="PLP-dependent transferases"/>
    <property type="match status" value="1"/>
</dbReference>
<dbReference type="PROSITE" id="PS00600">
    <property type="entry name" value="AA_TRANSFER_CLASS_3"/>
    <property type="match status" value="1"/>
</dbReference>
<comment type="catalytic activity">
    <reaction evidence="1">
        <text>(S)-4-amino-5-oxopentanoate = 5-aminolevulinate</text>
        <dbReference type="Rhea" id="RHEA:14265"/>
        <dbReference type="ChEBI" id="CHEBI:57501"/>
        <dbReference type="ChEBI" id="CHEBI:356416"/>
        <dbReference type="EC" id="5.4.3.8"/>
    </reaction>
</comment>
<comment type="cofactor">
    <cofactor evidence="1">
        <name>pyridoxal 5'-phosphate</name>
        <dbReference type="ChEBI" id="CHEBI:597326"/>
    </cofactor>
</comment>
<comment type="pathway">
    <text evidence="1">Porphyrin-containing compound metabolism; protoporphyrin-IX biosynthesis; 5-aminolevulinate from L-glutamyl-tRNA(Glu): step 2/2.</text>
</comment>
<comment type="subunit">
    <text evidence="1">Homodimer.</text>
</comment>
<comment type="subcellular location">
    <subcellularLocation>
        <location evidence="1">Cytoplasm</location>
    </subcellularLocation>
</comment>
<comment type="similarity">
    <text evidence="1">Belongs to the class-III pyridoxal-phosphate-dependent aminotransferase family. HemL subfamily.</text>
</comment>
<gene>
    <name evidence="1" type="primary">hemL</name>
    <name type="ordered locus">VFMJ11_2243</name>
</gene>
<sequence>MTKSAELFAKAQDKIPGGVNSPVRAFAGVGGSPIFVERADGPLIFDADGKAYIDYVGSWGPMILGHNHAAIREAVISAAQRGLSFGAPTETEITMAELVSELVPSMEQVRMVSSGTEATMSAIRLARGYTGRDKIMKFEGCYHGHADSLLVKAGSGALTLGQPSSPGVPADFAKYTLTATFNDLDSVRELFTANKGEIACIIVEPVAGNMNCIPPVEGFHEGLRQICDEEGALLIFDEVMTGFRVAENCAQGYYNIKPDLTTLGKVIGGGMPVGAFGGRKDVMQYIAPTGPVYQAGTLSGNPVAMAAGFACLKVLTEEGNEKRLADTTKHLANGFKELANKHGIPMVVNQVGGMFGFFFTDQETVTSYADVAKCDIERFKRFFHLMLKKGVYLAPSAFEASFTSLAHGPKEIEATLEAADQCFAIIASETK</sequence>
<keyword id="KW-0963">Cytoplasm</keyword>
<keyword id="KW-0413">Isomerase</keyword>
<keyword id="KW-0627">Porphyrin biosynthesis</keyword>
<keyword id="KW-0663">Pyridoxal phosphate</keyword>
<reference key="1">
    <citation type="submission" date="2008-08" db="EMBL/GenBank/DDBJ databases">
        <title>Complete sequence of Vibrio fischeri strain MJ11.</title>
        <authorList>
            <person name="Mandel M.J."/>
            <person name="Stabb E.V."/>
            <person name="Ruby E.G."/>
            <person name="Ferriera S."/>
            <person name="Johnson J."/>
            <person name="Kravitz S."/>
            <person name="Beeson K."/>
            <person name="Sutton G."/>
            <person name="Rogers Y.-H."/>
            <person name="Friedman R."/>
            <person name="Frazier M."/>
            <person name="Venter J.C."/>
        </authorList>
    </citation>
    <scope>NUCLEOTIDE SEQUENCE [LARGE SCALE GENOMIC DNA]</scope>
    <source>
        <strain>MJ11</strain>
    </source>
</reference>
<protein>
    <recommendedName>
        <fullName evidence="1">Glutamate-1-semialdehyde 2,1-aminomutase</fullName>
        <shortName evidence="1">GSA</shortName>
        <ecNumber evidence="1">5.4.3.8</ecNumber>
    </recommendedName>
    <alternativeName>
        <fullName evidence="1">Glutamate-1-semialdehyde aminotransferase</fullName>
        <shortName evidence="1">GSA-AT</shortName>
    </alternativeName>
</protein>
<name>GSA_ALIFM</name>
<organism>
    <name type="scientific">Aliivibrio fischeri (strain MJ11)</name>
    <name type="common">Vibrio fischeri</name>
    <dbReference type="NCBI Taxonomy" id="388396"/>
    <lineage>
        <taxon>Bacteria</taxon>
        <taxon>Pseudomonadati</taxon>
        <taxon>Pseudomonadota</taxon>
        <taxon>Gammaproteobacteria</taxon>
        <taxon>Vibrionales</taxon>
        <taxon>Vibrionaceae</taxon>
        <taxon>Aliivibrio</taxon>
    </lineage>
</organism>
<accession>B5FAL8</accession>
<evidence type="ECO:0000255" key="1">
    <source>
        <dbReference type="HAMAP-Rule" id="MF_00375"/>
    </source>
</evidence>
<proteinExistence type="inferred from homology"/>